<organism>
    <name type="scientific">Influenza A virus (strain A/Qu/7/1970 H3N2)</name>
    <dbReference type="NCBI Taxonomy" id="221016"/>
    <lineage>
        <taxon>Viruses</taxon>
        <taxon>Riboviria</taxon>
        <taxon>Orthornavirae</taxon>
        <taxon>Negarnaviricota</taxon>
        <taxon>Polyploviricotina</taxon>
        <taxon>Insthoviricetes</taxon>
        <taxon>Articulavirales</taxon>
        <taxon>Orthomyxoviridae</taxon>
        <taxon>Alphainfluenzavirus</taxon>
        <taxon>Alphainfluenzavirus influenzae</taxon>
        <taxon>Influenza A virus</taxon>
    </lineage>
</organism>
<proteinExistence type="inferred from homology"/>
<organismHost>
    <name type="scientific">Aves</name>
    <dbReference type="NCBI Taxonomy" id="8782"/>
</organismHost>
<organismHost>
    <name type="scientific">Cetacea</name>
    <name type="common">whales</name>
    <dbReference type="NCBI Taxonomy" id="9721"/>
</organismHost>
<organismHost>
    <name type="scientific">Homo sapiens</name>
    <name type="common">Human</name>
    <dbReference type="NCBI Taxonomy" id="9606"/>
</organismHost>
<organismHost>
    <name type="scientific">Phocidae</name>
    <name type="common">true seals</name>
    <dbReference type="NCBI Taxonomy" id="9709"/>
</organismHost>
<organismHost>
    <name type="scientific">Sus scrofa</name>
    <name type="common">Pig</name>
    <dbReference type="NCBI Taxonomy" id="9823"/>
</organismHost>
<feature type="chain" id="PRO_0000280148" description="Neuraminidase">
    <location>
        <begin position="1"/>
        <end position="469"/>
    </location>
</feature>
<feature type="topological domain" description="Intravirion" evidence="1">
    <location>
        <begin position="1"/>
        <end position="9"/>
    </location>
</feature>
<feature type="transmembrane region" description="Helical" evidence="1">
    <location>
        <begin position="10"/>
        <end position="30"/>
    </location>
</feature>
<feature type="topological domain" description="Virion surface" evidence="1">
    <location>
        <begin position="31"/>
        <end position="469"/>
    </location>
</feature>
<feature type="region of interest" description="Involved in apical transport and lipid raft association" evidence="1">
    <location>
        <begin position="11"/>
        <end position="33"/>
    </location>
</feature>
<feature type="region of interest" description="Hypervariable stalk region" evidence="1">
    <location>
        <begin position="36"/>
        <end position="88"/>
    </location>
</feature>
<feature type="region of interest" description="Head of neuraminidase" evidence="1">
    <location>
        <begin position="91"/>
        <end position="469"/>
    </location>
</feature>
<feature type="region of interest" description="Disordered" evidence="2">
    <location>
        <begin position="326"/>
        <end position="350"/>
    </location>
</feature>
<feature type="compositionally biased region" description="Low complexity" evidence="2">
    <location>
        <begin position="331"/>
        <end position="343"/>
    </location>
</feature>
<feature type="active site" description="Proton donor/acceptor" evidence="1">
    <location>
        <position position="151"/>
    </location>
</feature>
<feature type="active site" description="Nucleophile" evidence="1">
    <location>
        <position position="406"/>
    </location>
</feature>
<feature type="binding site" evidence="1">
    <location>
        <position position="118"/>
    </location>
    <ligand>
        <name>substrate</name>
    </ligand>
</feature>
<feature type="binding site" evidence="1">
    <location>
        <position position="152"/>
    </location>
    <ligand>
        <name>substrate</name>
    </ligand>
</feature>
<feature type="binding site" evidence="1">
    <location>
        <begin position="276"/>
        <end position="277"/>
    </location>
    <ligand>
        <name>substrate</name>
    </ligand>
</feature>
<feature type="binding site" evidence="1">
    <location>
        <position position="292"/>
    </location>
    <ligand>
        <name>substrate</name>
    </ligand>
</feature>
<feature type="binding site" evidence="1">
    <location>
        <position position="293"/>
    </location>
    <ligand>
        <name>Ca(2+)</name>
        <dbReference type="ChEBI" id="CHEBI:29108"/>
    </ligand>
</feature>
<feature type="binding site" evidence="1">
    <location>
        <position position="297"/>
    </location>
    <ligand>
        <name>Ca(2+)</name>
        <dbReference type="ChEBI" id="CHEBI:29108"/>
    </ligand>
</feature>
<feature type="binding site" evidence="1">
    <location>
        <position position="324"/>
    </location>
    <ligand>
        <name>Ca(2+)</name>
        <dbReference type="ChEBI" id="CHEBI:29108"/>
    </ligand>
</feature>
<feature type="binding site" evidence="1">
    <location>
        <position position="371"/>
    </location>
    <ligand>
        <name>substrate</name>
    </ligand>
</feature>
<feature type="glycosylation site" description="N-linked (GlcNAc...) asparagine; by host" evidence="1">
    <location>
        <position position="61"/>
    </location>
</feature>
<feature type="glycosylation site" description="N-linked (GlcNAc...) asparagine; by host" evidence="1">
    <location>
        <position position="70"/>
    </location>
</feature>
<feature type="glycosylation site" description="N-linked (GlcNAc...) asparagine; by host" evidence="1">
    <location>
        <position position="86"/>
    </location>
</feature>
<feature type="glycosylation site" description="N-linked (GlcNAc...) asparagine; by host" evidence="1">
    <location>
        <position position="146"/>
    </location>
</feature>
<feature type="glycosylation site" description="N-linked (GlcNAc...) asparagine; by host" evidence="1">
    <location>
        <position position="200"/>
    </location>
</feature>
<feature type="glycosylation site" description="N-linked (GlcNAc...) asparagine; by host" evidence="1">
    <location>
        <position position="234"/>
    </location>
</feature>
<feature type="glycosylation site" description="N-linked (GlcNAc...) asparagine; by host" evidence="1">
    <location>
        <position position="402"/>
    </location>
</feature>
<feature type="disulfide bond" evidence="1">
    <location>
        <begin position="92"/>
        <end position="417"/>
    </location>
</feature>
<feature type="disulfide bond" evidence="1">
    <location>
        <begin position="124"/>
        <end position="129"/>
    </location>
</feature>
<feature type="disulfide bond" evidence="1">
    <location>
        <begin position="183"/>
        <end position="230"/>
    </location>
</feature>
<feature type="disulfide bond" evidence="1">
    <location>
        <begin position="232"/>
        <end position="237"/>
    </location>
</feature>
<feature type="disulfide bond" evidence="1">
    <location>
        <begin position="278"/>
        <end position="291"/>
    </location>
</feature>
<feature type="disulfide bond" evidence="1">
    <location>
        <begin position="280"/>
        <end position="289"/>
    </location>
</feature>
<feature type="disulfide bond" evidence="1">
    <location>
        <begin position="318"/>
        <end position="337"/>
    </location>
</feature>
<feature type="disulfide bond" evidence="1">
    <location>
        <begin position="421"/>
        <end position="447"/>
    </location>
</feature>
<reference key="1">
    <citation type="journal article" date="2004" name="Virology">
        <title>Genetic analysis of human H2N2 and early H3N2 influenza viruses, 1957-1972: evidence for genetic divergence and multiple reassortment events.</title>
        <authorList>
            <person name="Lindstrom S.E."/>
            <person name="Cox N.J."/>
            <person name="Klimov A."/>
        </authorList>
    </citation>
    <scope>NUCLEOTIDE SEQUENCE [GENOMIC RNA]</scope>
</reference>
<reference key="2">
    <citation type="journal article" date="2004" name="Virus Res.">
        <title>Assembly and budding of influenza virus.</title>
        <authorList>
            <person name="Nayak D.P."/>
            <person name="Hui E.K."/>
            <person name="Barman S."/>
        </authorList>
    </citation>
    <scope>REVIEW</scope>
</reference>
<reference key="3">
    <citation type="journal article" date="2005" name="N. Engl. J. Med.">
        <title>Neuraminidase inhibitors for influenza.</title>
        <authorList>
            <person name="Moscona A."/>
        </authorList>
    </citation>
    <scope>REVIEW</scope>
</reference>
<reference key="4">
    <citation type="journal article" date="2005" name="Biol. Pharm. Bull.">
        <title>Sialobiology of influenza: molecular mechanism of host range variation of influenza viruses.</title>
        <authorList>
            <person name="Suzuki Y."/>
        </authorList>
    </citation>
    <scope>REVIEW</scope>
</reference>
<accession>Q6XTM7</accession>
<name>NRAM_I70A0</name>
<comment type="function">
    <text evidence="1">Catalyzes the removal of terminal sialic acid residues from viral and cellular glycoconjugates. Cleaves off the terminal sialic acids on the glycosylated HA during virus budding to facilitate virus release. Additionally helps virus spread through the circulation by further removing sialic acids from the cell surface. These cleavages prevent self-aggregation and ensure the efficient spread of the progeny virus from cell to cell. Otherwise, infection would be limited to one round of replication. Described as a receptor-destroying enzyme because it cleaves a terminal sialic acid from the cellular receptors. May facilitate viral invasion of the upper airways by cleaving the sialic acid moieties on the mucin of the airway epithelial cells. Likely to plays a role in the budding process through its association with lipid rafts during intracellular transport. May additionally display a raft-association independent effect on budding. Plays a role in the determination of host range restriction on replication and virulence. Sialidase activity in late endosome/lysosome traffic seems to enhance virus replication.</text>
</comment>
<comment type="catalytic activity">
    <reaction evidence="1">
        <text>Hydrolysis of alpha-(2-&gt;3)-, alpha-(2-&gt;6)-, alpha-(2-&gt;8)- glycosidic linkages of terminal sialic acid residues in oligosaccharides, glycoproteins, glycolipids, colominic acid and synthetic substrates.</text>
        <dbReference type="EC" id="3.2.1.18"/>
    </reaction>
</comment>
<comment type="cofactor">
    <cofactor evidence="1">
        <name>Ca(2+)</name>
        <dbReference type="ChEBI" id="CHEBI:29108"/>
    </cofactor>
</comment>
<comment type="activity regulation">
    <text evidence="1">Inhibited by the neuraminidase inhibitors zanamivir (Relenza) and oseltamivir (Tamiflu). These drugs interfere with the release of progeny virus from infected cells and are effective against all influenza strains. Resistance to neuraminidase inhibitors is quite rare.</text>
</comment>
<comment type="subunit">
    <text evidence="1">Homotetramer.</text>
</comment>
<comment type="subcellular location">
    <subcellularLocation>
        <location evidence="1">Virion membrane</location>
    </subcellularLocation>
    <subcellularLocation>
        <location evidence="1">Host apical cell membrane</location>
        <topology evidence="1">Single-pass type II membrane protein</topology>
    </subcellularLocation>
    <text evidence="1">Preferentially accumulates at the apical plasma membrane in infected polarized epithelial cells, which is the virus assembly site. Uses lipid rafts for cell surface transport and apical sorting. In the virion, forms a mushroom-shaped spike on the surface of the membrane.</text>
</comment>
<comment type="domain">
    <text evidence="1">Intact N-terminus is essential for virion morphogenesis. Possesses two apical sorting signals, one in the ectodomain, which is likely to be a glycan, and the other in the transmembrane domain. The transmembrane domain also plays a role in lipid raft association.</text>
</comment>
<comment type="PTM">
    <text evidence="1">N-glycosylated.</text>
</comment>
<comment type="miscellaneous">
    <text>The influenza A genome consist of 8 RNA segments. Genetic variation of hemagglutinin and/or neuraminidase genes results in the emergence of new influenza strains. The mechanism of variation can be the result of point mutations or the result of genetic reassortment between segments of two different strains.</text>
</comment>
<comment type="similarity">
    <text evidence="1">Belongs to the glycosyl hydrolase 34 family.</text>
</comment>
<dbReference type="EC" id="3.2.1.18" evidence="1"/>
<dbReference type="EMBL" id="AY210125">
    <property type="protein sequence ID" value="AAO46481.1"/>
    <property type="molecule type" value="Genomic_RNA"/>
</dbReference>
<dbReference type="SMR" id="Q6XTM7"/>
<dbReference type="CAZy" id="GH34">
    <property type="family name" value="Glycoside Hydrolase Family 34"/>
</dbReference>
<dbReference type="GlyCosmos" id="Q6XTM7">
    <property type="glycosylation" value="7 sites, No reported glycans"/>
</dbReference>
<dbReference type="GO" id="GO:0020002">
    <property type="term" value="C:host cell plasma membrane"/>
    <property type="evidence" value="ECO:0007669"/>
    <property type="project" value="UniProtKB-SubCell"/>
</dbReference>
<dbReference type="GO" id="GO:0016020">
    <property type="term" value="C:membrane"/>
    <property type="evidence" value="ECO:0007669"/>
    <property type="project" value="UniProtKB-UniRule"/>
</dbReference>
<dbReference type="GO" id="GO:0055036">
    <property type="term" value="C:virion membrane"/>
    <property type="evidence" value="ECO:0007669"/>
    <property type="project" value="UniProtKB-SubCell"/>
</dbReference>
<dbReference type="GO" id="GO:0004308">
    <property type="term" value="F:exo-alpha-sialidase activity"/>
    <property type="evidence" value="ECO:0007669"/>
    <property type="project" value="UniProtKB-UniRule"/>
</dbReference>
<dbReference type="GO" id="GO:0046872">
    <property type="term" value="F:metal ion binding"/>
    <property type="evidence" value="ECO:0007669"/>
    <property type="project" value="UniProtKB-UniRule"/>
</dbReference>
<dbReference type="GO" id="GO:0005975">
    <property type="term" value="P:carbohydrate metabolic process"/>
    <property type="evidence" value="ECO:0007669"/>
    <property type="project" value="InterPro"/>
</dbReference>
<dbReference type="GO" id="GO:0046761">
    <property type="term" value="P:viral budding from plasma membrane"/>
    <property type="evidence" value="ECO:0007669"/>
    <property type="project" value="UniProtKB-UniRule"/>
</dbReference>
<dbReference type="CDD" id="cd15483">
    <property type="entry name" value="Influenza_NA"/>
    <property type="match status" value="1"/>
</dbReference>
<dbReference type="Gene3D" id="2.120.10.10">
    <property type="match status" value="1"/>
</dbReference>
<dbReference type="HAMAP" id="MF_04071">
    <property type="entry name" value="INFV_NRAM"/>
    <property type="match status" value="1"/>
</dbReference>
<dbReference type="InterPro" id="IPR001860">
    <property type="entry name" value="Glyco_hydro_34"/>
</dbReference>
<dbReference type="InterPro" id="IPR033654">
    <property type="entry name" value="Sialidase_Influenza_A/B"/>
</dbReference>
<dbReference type="InterPro" id="IPR036278">
    <property type="entry name" value="Sialidase_sf"/>
</dbReference>
<dbReference type="Pfam" id="PF00064">
    <property type="entry name" value="Neur"/>
    <property type="match status" value="1"/>
</dbReference>
<dbReference type="SUPFAM" id="SSF50939">
    <property type="entry name" value="Sialidases"/>
    <property type="match status" value="1"/>
</dbReference>
<keyword id="KW-0106">Calcium</keyword>
<keyword id="KW-1015">Disulfide bond</keyword>
<keyword id="KW-0325">Glycoprotein</keyword>
<keyword id="KW-0326">Glycosidase</keyword>
<keyword id="KW-1032">Host cell membrane</keyword>
<keyword id="KW-1043">Host membrane</keyword>
<keyword id="KW-0378">Hydrolase</keyword>
<keyword id="KW-0472">Membrane</keyword>
<keyword id="KW-0479">Metal-binding</keyword>
<keyword id="KW-0735">Signal-anchor</keyword>
<keyword id="KW-0812">Transmembrane</keyword>
<keyword id="KW-1133">Transmembrane helix</keyword>
<keyword id="KW-0946">Virion</keyword>
<evidence type="ECO:0000255" key="1">
    <source>
        <dbReference type="HAMAP-Rule" id="MF_04071"/>
    </source>
</evidence>
<evidence type="ECO:0000256" key="2">
    <source>
        <dbReference type="SAM" id="MobiDB-lite"/>
    </source>
</evidence>
<sequence length="469" mass="52175">MNPNQKIITIGSVSLTIATVCFLMQIAILVTTVTLHFKQYECDSPANNQVMPCEPIIIERNITEIVYLTNTTIEKEICPKLVEYRNWSKPQCKITGFAPFSKDNSIRLSAGGDIWVTREPYVSCDPGKCYQFALGQGTTLDNKHSNDTIHDRIPHRTLLMNELGVPFHLGTRQVCIAWSSSSCHDGKAWLHVCVTGDDKNATASFIYDGRLVDSIGSWSQNILRTQESECVCINGTCTVVMTDGSASGRADTRILFIEEGKIVHISPLSGSAQHVEECSCYPRYPGVRCICRDNWKGSNRPVVDINVKDYSIDSRYVCSGLVGDTPRNNDRSSNSNCRNPNNERGNHGVKGWAFDDGNDVWMGRTISKDSRSGYETFKVIGGWSTPNSKSQINRQVIVDSDNRSGYSGIFSVESKSCINRCFYVELIRGREQETRVWWTSNSIVVFCGTSGTYGTGSWPDGADINLMPI</sequence>
<gene>
    <name evidence="1" type="primary">NA</name>
</gene>
<protein>
    <recommendedName>
        <fullName evidence="1">Neuraminidase</fullName>
        <ecNumber evidence="1">3.2.1.18</ecNumber>
    </recommendedName>
</protein>